<accession>Q44756</accession>
<comment type="subcellular location">
    <subcellularLocation>
        <location evidence="2">Cell membrane</location>
        <topology evidence="2">Multi-pass membrane protein</topology>
    </subcellularLocation>
</comment>
<evidence type="ECO:0000255" key="1"/>
<evidence type="ECO:0000305" key="2"/>
<sequence length="159" mass="18344">MFISRELKYILLTSVSALFISAVLGLFCGLSFFTILVRSLLQFVFFFVIGLLIEYIFKKYLSNLFSTELSGNMENKPQDDKKSDKDFKENLDFQNKNSLYENSQNISSSGDFIEEVKKYKFETEDVSRGSDKNKKMSFIEDNDPKVVADAIKTLMSKKE</sequence>
<proteinExistence type="predicted"/>
<organism>
    <name type="scientific">Borreliella burgdorferi (strain ATCC 35210 / DSM 4680 / CIP 102532 / B31)</name>
    <name type="common">Borrelia burgdorferi</name>
    <dbReference type="NCBI Taxonomy" id="224326"/>
    <lineage>
        <taxon>Bacteria</taxon>
        <taxon>Pseudomonadati</taxon>
        <taxon>Spirochaetota</taxon>
        <taxon>Spirochaetia</taxon>
        <taxon>Spirochaetales</taxon>
        <taxon>Borreliaceae</taxon>
        <taxon>Borreliella</taxon>
    </lineage>
</organism>
<gene>
    <name type="ordered locus">BB_0268</name>
</gene>
<feature type="chain" id="PRO_0000174389" description="Uncharacterized protein BB_0268">
    <location>
        <begin position="1"/>
        <end position="159"/>
    </location>
</feature>
<feature type="transmembrane region" description="Helical" evidence="1">
    <location>
        <begin position="17"/>
        <end position="37"/>
    </location>
</feature>
<feature type="transmembrane region" description="Helical" evidence="1">
    <location>
        <begin position="40"/>
        <end position="60"/>
    </location>
</feature>
<name>Y268_BORBU</name>
<reference key="1">
    <citation type="submission" date="1995-12" db="EMBL/GenBank/DDBJ databases">
        <authorList>
            <person name="Dunn J.J."/>
            <person name="Butler-Loffredo L."/>
            <person name="Kieleczawa J."/>
            <person name="Medalle J."/>
            <person name="Luft B.J."/>
        </authorList>
    </citation>
    <scope>NUCLEOTIDE SEQUENCE [GENOMIC DNA]</scope>
    <source>
        <strain>ATCC 35210 / DSM 4680 / CIP 102532 / B31</strain>
    </source>
</reference>
<reference key="2">
    <citation type="journal article" date="1997" name="Nature">
        <title>Genomic sequence of a Lyme disease spirochaete, Borrelia burgdorferi.</title>
        <authorList>
            <person name="Fraser C.M."/>
            <person name="Casjens S."/>
            <person name="Huang W.M."/>
            <person name="Sutton G.G."/>
            <person name="Clayton R.A."/>
            <person name="Lathigra R."/>
            <person name="White O."/>
            <person name="Ketchum K.A."/>
            <person name="Dodson R.J."/>
            <person name="Hickey E.K."/>
            <person name="Gwinn M.L."/>
            <person name="Dougherty B.A."/>
            <person name="Tomb J.-F."/>
            <person name="Fleischmann R.D."/>
            <person name="Richardson D.L."/>
            <person name="Peterson J.D."/>
            <person name="Kerlavage A.R."/>
            <person name="Quackenbush J."/>
            <person name="Salzberg S.L."/>
            <person name="Hanson M."/>
            <person name="van Vugt R."/>
            <person name="Palmer N."/>
            <person name="Adams M.D."/>
            <person name="Gocayne J.D."/>
            <person name="Weidman J.F."/>
            <person name="Utterback T.R."/>
            <person name="Watthey L."/>
            <person name="McDonald L.A."/>
            <person name="Artiach P."/>
            <person name="Bowman C."/>
            <person name="Garland S.A."/>
            <person name="Fujii C."/>
            <person name="Cotton M.D."/>
            <person name="Horst K."/>
            <person name="Roberts K.M."/>
            <person name="Hatch B."/>
            <person name="Smith H.O."/>
            <person name="Venter J.C."/>
        </authorList>
    </citation>
    <scope>NUCLEOTIDE SEQUENCE [LARGE SCALE GENOMIC DNA]</scope>
    <source>
        <strain>ATCC 35210 / DSM 4680 / CIP 102532 / B31</strain>
    </source>
</reference>
<protein>
    <recommendedName>
        <fullName>Uncharacterized protein BB_0268</fullName>
    </recommendedName>
    <alternativeName>
        <fullName>ORF36</fullName>
    </alternativeName>
</protein>
<dbReference type="EMBL" id="U43739">
    <property type="protein sequence ID" value="AAA85592.1"/>
    <property type="molecule type" value="Genomic_DNA"/>
</dbReference>
<dbReference type="EMBL" id="AE000783">
    <property type="protein sequence ID" value="AAC66680.1"/>
    <property type="molecule type" value="Genomic_DNA"/>
</dbReference>
<dbReference type="PIR" id="D70133">
    <property type="entry name" value="D70133"/>
</dbReference>
<dbReference type="RefSeq" id="NP_212402.1">
    <property type="nucleotide sequence ID" value="NC_001318.1"/>
</dbReference>
<dbReference type="SMR" id="Q44756"/>
<dbReference type="STRING" id="224326.BB_0268"/>
<dbReference type="PaxDb" id="224326-BB_0268"/>
<dbReference type="EnsemblBacteria" id="AAC66680">
    <property type="protein sequence ID" value="AAC66680"/>
    <property type="gene ID" value="BB_0268"/>
</dbReference>
<dbReference type="KEGG" id="bbu:BB_0268"/>
<dbReference type="PATRIC" id="fig|224326.49.peg.667"/>
<dbReference type="HOGENOM" id="CLU_1632186_0_0_12"/>
<dbReference type="OrthoDB" id="350988at2"/>
<dbReference type="Proteomes" id="UP000001807">
    <property type="component" value="Chromosome"/>
</dbReference>
<dbReference type="GO" id="GO:0005886">
    <property type="term" value="C:plasma membrane"/>
    <property type="evidence" value="ECO:0007669"/>
    <property type="project" value="UniProtKB-SubCell"/>
</dbReference>
<keyword id="KW-1003">Cell membrane</keyword>
<keyword id="KW-0472">Membrane</keyword>
<keyword id="KW-1185">Reference proteome</keyword>
<keyword id="KW-0812">Transmembrane</keyword>
<keyword id="KW-1133">Transmembrane helix</keyword>